<feature type="chain" id="PRO_0000328495" description="Bax inhibitor 1 homolog">
    <location>
        <begin position="1"/>
        <end position="254"/>
    </location>
</feature>
<feature type="topological domain" description="Cytoplasmic" evidence="2">
    <location>
        <begin position="1"/>
        <end position="43"/>
    </location>
</feature>
<feature type="transmembrane region" description="Helical" evidence="2">
    <location>
        <begin position="44"/>
        <end position="64"/>
    </location>
</feature>
<feature type="topological domain" description="Lumenal" evidence="2">
    <location>
        <begin position="65"/>
        <end position="66"/>
    </location>
</feature>
<feature type="transmembrane region" description="Helical" evidence="2">
    <location>
        <begin position="67"/>
        <end position="87"/>
    </location>
</feature>
<feature type="topological domain" description="Cytoplasmic" evidence="2">
    <location>
        <begin position="88"/>
        <end position="98"/>
    </location>
</feature>
<feature type="transmembrane region" description="Helical" evidence="2">
    <location>
        <begin position="99"/>
        <end position="119"/>
    </location>
</feature>
<feature type="topological domain" description="Lumenal" evidence="2">
    <location>
        <begin position="120"/>
        <end position="126"/>
    </location>
</feature>
<feature type="transmembrane region" description="Helical" evidence="2">
    <location>
        <begin position="127"/>
        <end position="147"/>
    </location>
</feature>
<feature type="topological domain" description="Cytoplasmic" evidence="2">
    <location>
        <begin position="148"/>
        <end position="152"/>
    </location>
</feature>
<feature type="transmembrane region" description="Helical" evidence="2">
    <location>
        <begin position="153"/>
        <end position="173"/>
    </location>
</feature>
<feature type="topological domain" description="Lumenal" evidence="2">
    <location>
        <begin position="174"/>
        <end position="187"/>
    </location>
</feature>
<feature type="transmembrane region" description="Helical" evidence="2">
    <location>
        <begin position="188"/>
        <end position="208"/>
    </location>
</feature>
<feature type="topological domain" description="Cytoplasmic" evidence="2">
    <location>
        <begin position="209"/>
        <end position="217"/>
    </location>
</feature>
<feature type="intramembrane region" description="Helical" evidence="2">
    <location>
        <begin position="218"/>
        <end position="238"/>
    </location>
</feature>
<feature type="topological domain" description="Cytoplasmic" evidence="2">
    <location>
        <begin position="239"/>
        <end position="254"/>
    </location>
</feature>
<organism>
    <name type="scientific">Dictyostelium discoideum</name>
    <name type="common">Social amoeba</name>
    <dbReference type="NCBI Taxonomy" id="44689"/>
    <lineage>
        <taxon>Eukaryota</taxon>
        <taxon>Amoebozoa</taxon>
        <taxon>Evosea</taxon>
        <taxon>Eumycetozoa</taxon>
        <taxon>Dictyostelia</taxon>
        <taxon>Dictyosteliales</taxon>
        <taxon>Dictyosteliaceae</taxon>
        <taxon>Dictyostelium</taxon>
    </lineage>
</organism>
<dbReference type="EMBL" id="AAFI02000103">
    <property type="protein sequence ID" value="EAL63617.1"/>
    <property type="molecule type" value="Genomic_DNA"/>
</dbReference>
<dbReference type="RefSeq" id="XP_637124.1">
    <property type="nucleotide sequence ID" value="XM_632032.1"/>
</dbReference>
<dbReference type="SMR" id="Q54K40"/>
<dbReference type="FunCoup" id="Q54K40">
    <property type="interactions" value="79"/>
</dbReference>
<dbReference type="STRING" id="44689.Q54K40"/>
<dbReference type="PaxDb" id="44689-DDB0305147"/>
<dbReference type="EnsemblProtists" id="EAL63617">
    <property type="protein sequence ID" value="EAL63617"/>
    <property type="gene ID" value="DDB_G0287617"/>
</dbReference>
<dbReference type="GeneID" id="8626219"/>
<dbReference type="KEGG" id="ddi:DDB_G0287617"/>
<dbReference type="dictyBase" id="DDB_G0287617"/>
<dbReference type="VEuPathDB" id="AmoebaDB:DDB_G0287617"/>
<dbReference type="eggNOG" id="KOG1629">
    <property type="taxonomic scope" value="Eukaryota"/>
</dbReference>
<dbReference type="HOGENOM" id="CLU_061277_0_0_1"/>
<dbReference type="InParanoid" id="Q54K40"/>
<dbReference type="OMA" id="SRDFIMH"/>
<dbReference type="PhylomeDB" id="Q54K40"/>
<dbReference type="PRO" id="PR:Q54K40"/>
<dbReference type="Proteomes" id="UP000002195">
    <property type="component" value="Chromosome 5"/>
</dbReference>
<dbReference type="GO" id="GO:0005789">
    <property type="term" value="C:endoplasmic reticulum membrane"/>
    <property type="evidence" value="ECO:0007669"/>
    <property type="project" value="UniProtKB-SubCell"/>
</dbReference>
<dbReference type="GO" id="GO:0016020">
    <property type="term" value="C:membrane"/>
    <property type="evidence" value="ECO:0000318"/>
    <property type="project" value="GO_Central"/>
</dbReference>
<dbReference type="GO" id="GO:0005262">
    <property type="term" value="F:calcium channel activity"/>
    <property type="evidence" value="ECO:0000318"/>
    <property type="project" value="GO_Central"/>
</dbReference>
<dbReference type="InterPro" id="IPR006214">
    <property type="entry name" value="Bax_inhibitor_1-related"/>
</dbReference>
<dbReference type="PANTHER" id="PTHR23291:SF32">
    <property type="entry name" value="BAX INHIBITOR 1"/>
    <property type="match status" value="1"/>
</dbReference>
<dbReference type="PANTHER" id="PTHR23291">
    <property type="entry name" value="BAX INHIBITOR-RELATED"/>
    <property type="match status" value="1"/>
</dbReference>
<dbReference type="Pfam" id="PF01027">
    <property type="entry name" value="Bax1-I"/>
    <property type="match status" value="1"/>
</dbReference>
<evidence type="ECO:0000250" key="1"/>
<evidence type="ECO:0000255" key="2"/>
<evidence type="ECO:0000305" key="3"/>
<gene>
    <name type="ORF">DDB_G0287617</name>
</gene>
<accession>Q54K40</accession>
<keyword id="KW-0256">Endoplasmic reticulum</keyword>
<keyword id="KW-0472">Membrane</keyword>
<keyword id="KW-1185">Reference proteome</keyword>
<keyword id="KW-0812">Transmembrane</keyword>
<keyword id="KW-1133">Transmembrane helix</keyword>
<comment type="subcellular location">
    <subcellularLocation>
        <location evidence="1">Endoplasmic reticulum membrane</location>
        <topology evidence="1">Multi-pass membrane protein</topology>
    </subcellularLocation>
</comment>
<comment type="similarity">
    <text evidence="3">Belongs to the BI1 family.</text>
</comment>
<proteinExistence type="inferred from homology"/>
<name>BI1_DICDI</name>
<reference key="1">
    <citation type="journal article" date="2005" name="Nature">
        <title>The genome of the social amoeba Dictyostelium discoideum.</title>
        <authorList>
            <person name="Eichinger L."/>
            <person name="Pachebat J.A."/>
            <person name="Gloeckner G."/>
            <person name="Rajandream M.A."/>
            <person name="Sucgang R."/>
            <person name="Berriman M."/>
            <person name="Song J."/>
            <person name="Olsen R."/>
            <person name="Szafranski K."/>
            <person name="Xu Q."/>
            <person name="Tunggal B."/>
            <person name="Kummerfeld S."/>
            <person name="Madera M."/>
            <person name="Konfortov B.A."/>
            <person name="Rivero F."/>
            <person name="Bankier A.T."/>
            <person name="Lehmann R."/>
            <person name="Hamlin N."/>
            <person name="Davies R."/>
            <person name="Gaudet P."/>
            <person name="Fey P."/>
            <person name="Pilcher K."/>
            <person name="Chen G."/>
            <person name="Saunders D."/>
            <person name="Sodergren E.J."/>
            <person name="Davis P."/>
            <person name="Kerhornou A."/>
            <person name="Nie X."/>
            <person name="Hall N."/>
            <person name="Anjard C."/>
            <person name="Hemphill L."/>
            <person name="Bason N."/>
            <person name="Farbrother P."/>
            <person name="Desany B."/>
            <person name="Just E."/>
            <person name="Morio T."/>
            <person name="Rost R."/>
            <person name="Churcher C.M."/>
            <person name="Cooper J."/>
            <person name="Haydock S."/>
            <person name="van Driessche N."/>
            <person name="Cronin A."/>
            <person name="Goodhead I."/>
            <person name="Muzny D.M."/>
            <person name="Mourier T."/>
            <person name="Pain A."/>
            <person name="Lu M."/>
            <person name="Harper D."/>
            <person name="Lindsay R."/>
            <person name="Hauser H."/>
            <person name="James K.D."/>
            <person name="Quiles M."/>
            <person name="Madan Babu M."/>
            <person name="Saito T."/>
            <person name="Buchrieser C."/>
            <person name="Wardroper A."/>
            <person name="Felder M."/>
            <person name="Thangavelu M."/>
            <person name="Johnson D."/>
            <person name="Knights A."/>
            <person name="Loulseged H."/>
            <person name="Mungall K.L."/>
            <person name="Oliver K."/>
            <person name="Price C."/>
            <person name="Quail M.A."/>
            <person name="Urushihara H."/>
            <person name="Hernandez J."/>
            <person name="Rabbinowitsch E."/>
            <person name="Steffen D."/>
            <person name="Sanders M."/>
            <person name="Ma J."/>
            <person name="Kohara Y."/>
            <person name="Sharp S."/>
            <person name="Simmonds M.N."/>
            <person name="Spiegler S."/>
            <person name="Tivey A."/>
            <person name="Sugano S."/>
            <person name="White B."/>
            <person name="Walker D."/>
            <person name="Woodward J.R."/>
            <person name="Winckler T."/>
            <person name="Tanaka Y."/>
            <person name="Shaulsky G."/>
            <person name="Schleicher M."/>
            <person name="Weinstock G.M."/>
            <person name="Rosenthal A."/>
            <person name="Cox E.C."/>
            <person name="Chisholm R.L."/>
            <person name="Gibbs R.A."/>
            <person name="Loomis W.F."/>
            <person name="Platzer M."/>
            <person name="Kay R.R."/>
            <person name="Williams J.G."/>
            <person name="Dear P.H."/>
            <person name="Noegel A.A."/>
            <person name="Barrell B.G."/>
            <person name="Kuspa A."/>
        </authorList>
    </citation>
    <scope>NUCLEOTIDE SEQUENCE [LARGE SCALE GENOMIC DNA]</scope>
    <source>
        <strain>AX4</strain>
    </source>
</reference>
<protein>
    <recommendedName>
        <fullName>Bax inhibitor 1 homolog</fullName>
        <shortName>BI-1</shortName>
    </recommendedName>
</protein>
<sequence length="254" mass="28643">MASTSNRNFFSSNMTQIPMDEKIRIALQFNNLSQSTKQTLTKVYCALAIGILTATVGVLFSMFIYRPGFLMTLLLVIGSAILFATTPRTQDYKTQVKRFTLFNLVTFVTGMSSSGLIELYMDINSSIVLNAFMATCGIFISFTLFSLLTNKRLYIFIGSSLASLSIGIFVLALTRLFGGYSEPLDQLFILAILASSVLFIIFDTQIMVHRIENLGEKDVLFHAFILFYDFVDLFRVILKILAKKENKNNNKSRR</sequence>